<proteinExistence type="inferred from homology"/>
<evidence type="ECO:0000255" key="1">
    <source>
        <dbReference type="HAMAP-Rule" id="MF_00037"/>
    </source>
</evidence>
<comment type="function">
    <text evidence="1">Cell wall formation.</text>
</comment>
<comment type="catalytic activity">
    <reaction evidence="1">
        <text>UDP-N-acetyl-alpha-D-muramate + NADP(+) = UDP-N-acetyl-3-O-(1-carboxyvinyl)-alpha-D-glucosamine + NADPH + H(+)</text>
        <dbReference type="Rhea" id="RHEA:12248"/>
        <dbReference type="ChEBI" id="CHEBI:15378"/>
        <dbReference type="ChEBI" id="CHEBI:57783"/>
        <dbReference type="ChEBI" id="CHEBI:58349"/>
        <dbReference type="ChEBI" id="CHEBI:68483"/>
        <dbReference type="ChEBI" id="CHEBI:70757"/>
        <dbReference type="EC" id="1.3.1.98"/>
    </reaction>
</comment>
<comment type="cofactor">
    <cofactor evidence="1">
        <name>FAD</name>
        <dbReference type="ChEBI" id="CHEBI:57692"/>
    </cofactor>
</comment>
<comment type="pathway">
    <text evidence="1">Cell wall biogenesis; peptidoglycan biosynthesis.</text>
</comment>
<comment type="subcellular location">
    <subcellularLocation>
        <location evidence="1">Cytoplasm</location>
    </subcellularLocation>
</comment>
<comment type="similarity">
    <text evidence="1">Belongs to the MurB family.</text>
</comment>
<protein>
    <recommendedName>
        <fullName evidence="1">UDP-N-acetylenolpyruvoylglucosamine reductase</fullName>
        <ecNumber evidence="1">1.3.1.98</ecNumber>
    </recommendedName>
    <alternativeName>
        <fullName evidence="1">UDP-N-acetylmuramate dehydrogenase</fullName>
    </alternativeName>
</protein>
<accession>Q1JLT8</accession>
<reference key="1">
    <citation type="journal article" date="2006" name="Proc. Natl. Acad. Sci. U.S.A.">
        <title>Molecular genetic anatomy of inter- and intraserotype variation in the human bacterial pathogen group A Streptococcus.</title>
        <authorList>
            <person name="Beres S.B."/>
            <person name="Richter E.W."/>
            <person name="Nagiec M.J."/>
            <person name="Sumby P."/>
            <person name="Porcella S.F."/>
            <person name="DeLeo F.R."/>
            <person name="Musser J.M."/>
        </authorList>
    </citation>
    <scope>NUCLEOTIDE SEQUENCE [LARGE SCALE GENOMIC DNA]</scope>
    <source>
        <strain>MGAS9429</strain>
    </source>
</reference>
<organism>
    <name type="scientific">Streptococcus pyogenes serotype M12 (strain MGAS9429)</name>
    <dbReference type="NCBI Taxonomy" id="370551"/>
    <lineage>
        <taxon>Bacteria</taxon>
        <taxon>Bacillati</taxon>
        <taxon>Bacillota</taxon>
        <taxon>Bacilli</taxon>
        <taxon>Lactobacillales</taxon>
        <taxon>Streptococcaceae</taxon>
        <taxon>Streptococcus</taxon>
    </lineage>
</organism>
<name>MURB_STRPC</name>
<dbReference type="EC" id="1.3.1.98" evidence="1"/>
<dbReference type="EMBL" id="CP000259">
    <property type="protein sequence ID" value="ABF32131.1"/>
    <property type="molecule type" value="Genomic_DNA"/>
</dbReference>
<dbReference type="RefSeq" id="WP_002989865.1">
    <property type="nucleotide sequence ID" value="NC_008021.1"/>
</dbReference>
<dbReference type="SMR" id="Q1JLT8"/>
<dbReference type="KEGG" id="spk:MGAS9429_Spy0944"/>
<dbReference type="HOGENOM" id="CLU_035304_1_1_9"/>
<dbReference type="UniPathway" id="UPA00219"/>
<dbReference type="Proteomes" id="UP000002433">
    <property type="component" value="Chromosome"/>
</dbReference>
<dbReference type="GO" id="GO:0005829">
    <property type="term" value="C:cytosol"/>
    <property type="evidence" value="ECO:0007669"/>
    <property type="project" value="TreeGrafter"/>
</dbReference>
<dbReference type="GO" id="GO:0071949">
    <property type="term" value="F:FAD binding"/>
    <property type="evidence" value="ECO:0007669"/>
    <property type="project" value="InterPro"/>
</dbReference>
<dbReference type="GO" id="GO:0008762">
    <property type="term" value="F:UDP-N-acetylmuramate dehydrogenase activity"/>
    <property type="evidence" value="ECO:0007669"/>
    <property type="project" value="UniProtKB-UniRule"/>
</dbReference>
<dbReference type="GO" id="GO:0051301">
    <property type="term" value="P:cell division"/>
    <property type="evidence" value="ECO:0007669"/>
    <property type="project" value="UniProtKB-KW"/>
</dbReference>
<dbReference type="GO" id="GO:0071555">
    <property type="term" value="P:cell wall organization"/>
    <property type="evidence" value="ECO:0007669"/>
    <property type="project" value="UniProtKB-KW"/>
</dbReference>
<dbReference type="GO" id="GO:0009252">
    <property type="term" value="P:peptidoglycan biosynthetic process"/>
    <property type="evidence" value="ECO:0007669"/>
    <property type="project" value="UniProtKB-UniRule"/>
</dbReference>
<dbReference type="GO" id="GO:0008360">
    <property type="term" value="P:regulation of cell shape"/>
    <property type="evidence" value="ECO:0007669"/>
    <property type="project" value="UniProtKB-KW"/>
</dbReference>
<dbReference type="Gene3D" id="3.30.465.10">
    <property type="match status" value="1"/>
</dbReference>
<dbReference type="Gene3D" id="3.90.78.10">
    <property type="entry name" value="UDP-N-acetylenolpyruvoylglucosamine reductase, C-terminal domain"/>
    <property type="match status" value="1"/>
</dbReference>
<dbReference type="Gene3D" id="3.30.43.10">
    <property type="entry name" value="Uridine Diphospho-n-acetylenolpyruvylglucosamine Reductase, domain 2"/>
    <property type="match status" value="1"/>
</dbReference>
<dbReference type="HAMAP" id="MF_00037">
    <property type="entry name" value="MurB"/>
    <property type="match status" value="1"/>
</dbReference>
<dbReference type="InterPro" id="IPR016166">
    <property type="entry name" value="FAD-bd_PCMH"/>
</dbReference>
<dbReference type="InterPro" id="IPR036318">
    <property type="entry name" value="FAD-bd_PCMH-like_sf"/>
</dbReference>
<dbReference type="InterPro" id="IPR016167">
    <property type="entry name" value="FAD-bd_PCMH_sub1"/>
</dbReference>
<dbReference type="InterPro" id="IPR016169">
    <property type="entry name" value="FAD-bd_PCMH_sub2"/>
</dbReference>
<dbReference type="InterPro" id="IPR003170">
    <property type="entry name" value="MurB"/>
</dbReference>
<dbReference type="InterPro" id="IPR011601">
    <property type="entry name" value="MurB_C"/>
</dbReference>
<dbReference type="InterPro" id="IPR036635">
    <property type="entry name" value="MurB_C_sf"/>
</dbReference>
<dbReference type="InterPro" id="IPR006094">
    <property type="entry name" value="Oxid_FAD_bind_N"/>
</dbReference>
<dbReference type="NCBIfam" id="TIGR00179">
    <property type="entry name" value="murB"/>
    <property type="match status" value="1"/>
</dbReference>
<dbReference type="NCBIfam" id="NF010480">
    <property type="entry name" value="PRK13905.1"/>
    <property type="match status" value="1"/>
</dbReference>
<dbReference type="PANTHER" id="PTHR21071">
    <property type="entry name" value="UDP-N-ACETYLENOLPYRUVOYLGLUCOSAMINE REDUCTASE"/>
    <property type="match status" value="1"/>
</dbReference>
<dbReference type="PANTHER" id="PTHR21071:SF4">
    <property type="entry name" value="UDP-N-ACETYLENOLPYRUVOYLGLUCOSAMINE REDUCTASE"/>
    <property type="match status" value="1"/>
</dbReference>
<dbReference type="Pfam" id="PF01565">
    <property type="entry name" value="FAD_binding_4"/>
    <property type="match status" value="1"/>
</dbReference>
<dbReference type="Pfam" id="PF02873">
    <property type="entry name" value="MurB_C"/>
    <property type="match status" value="1"/>
</dbReference>
<dbReference type="SUPFAM" id="SSF56176">
    <property type="entry name" value="FAD-binding/transporter-associated domain-like"/>
    <property type="match status" value="1"/>
</dbReference>
<dbReference type="SUPFAM" id="SSF56194">
    <property type="entry name" value="Uridine diphospho-N-Acetylenolpyruvylglucosamine reductase, MurB, C-terminal domain"/>
    <property type="match status" value="1"/>
</dbReference>
<dbReference type="PROSITE" id="PS51387">
    <property type="entry name" value="FAD_PCMH"/>
    <property type="match status" value="1"/>
</dbReference>
<keyword id="KW-0131">Cell cycle</keyword>
<keyword id="KW-0132">Cell division</keyword>
<keyword id="KW-0133">Cell shape</keyword>
<keyword id="KW-0961">Cell wall biogenesis/degradation</keyword>
<keyword id="KW-0963">Cytoplasm</keyword>
<keyword id="KW-0274">FAD</keyword>
<keyword id="KW-0285">Flavoprotein</keyword>
<keyword id="KW-0521">NADP</keyword>
<keyword id="KW-0560">Oxidoreductase</keyword>
<keyword id="KW-0573">Peptidoglycan synthesis</keyword>
<feature type="chain" id="PRO_1000002919" description="UDP-N-acetylenolpyruvoylglucosamine reductase">
    <location>
        <begin position="1"/>
        <end position="295"/>
    </location>
</feature>
<feature type="domain" description="FAD-binding PCMH-type" evidence="1">
    <location>
        <begin position="23"/>
        <end position="188"/>
    </location>
</feature>
<feature type="active site" evidence="1">
    <location>
        <position position="167"/>
    </location>
</feature>
<feature type="active site" description="Proton donor" evidence="1">
    <location>
        <position position="217"/>
    </location>
</feature>
<feature type="active site" evidence="1">
    <location>
        <position position="287"/>
    </location>
</feature>
<gene>
    <name evidence="1" type="primary">murB</name>
    <name type="ordered locus">MGAS9429_Spy0944</name>
</gene>
<sequence>MITELHGIDIRENEPLKHYTYTKVGGPADFLAFPRNHYELSRIVAYANKENMPWLVLGNASNLIVRDGGIRGFVIMFDKLNAVHLNGYTLKAEAGANLIETTKIAKFHSLTGFEFACGIPGSIGGAVFMNAGAYGGEISHIFLSAKVLTPSGEIKTISARDMAFGYRHSAIQETGDIVISAKFALKPGNYDTISQEMNRLNHLRQLKQPLEFPSCGSVFKRPPGHFAGQLIMEANLKGHRIGGVEVSEKHAGFMINVADGTAKDYEDLIAYVIETVENHSGVKLEPEVRIIGENL</sequence>